<name>FIXA_ECO81</name>
<gene>
    <name evidence="1" type="primary">fixA</name>
    <name type="ordered locus">ECED1_0040</name>
</gene>
<organism>
    <name type="scientific">Escherichia coli O81 (strain ED1a)</name>
    <dbReference type="NCBI Taxonomy" id="585397"/>
    <lineage>
        <taxon>Bacteria</taxon>
        <taxon>Pseudomonadati</taxon>
        <taxon>Pseudomonadota</taxon>
        <taxon>Gammaproteobacteria</taxon>
        <taxon>Enterobacterales</taxon>
        <taxon>Enterobacteriaceae</taxon>
        <taxon>Escherichia</taxon>
    </lineage>
</organism>
<accession>B7MNP8</accession>
<protein>
    <recommendedName>
        <fullName evidence="1">Protein FixA</fullName>
    </recommendedName>
</protein>
<sequence>MKIITCYKCVPDEQDIAVNNADGSLDFSKADAKISQYDLNAIEAACQLKQQAVEAQVTALSVGGKALTNAKGRKDVLSRGPDELIVVIDDQFEQALPQQTASVLAAAAQKAGFDLILCGDGSSDLYAQQVGLLVGEILNIPAVNGVSKIISLTADTLTVERELEDETETLSIPLPAVVAVSTDINSPQIPSMKAILGAAKKPVQVWSAADIGFNAEAAWSEQQVAAPKQRERQRIVIEGDGEEQIAAFAENLRKVI</sequence>
<proteinExistence type="inferred from homology"/>
<evidence type="ECO:0000255" key="1">
    <source>
        <dbReference type="HAMAP-Rule" id="MF_01055"/>
    </source>
</evidence>
<feature type="chain" id="PRO_1000149637" description="Protein FixA">
    <location>
        <begin position="1"/>
        <end position="256"/>
    </location>
</feature>
<dbReference type="EMBL" id="CU928162">
    <property type="protein sequence ID" value="CAR06263.1"/>
    <property type="molecule type" value="Genomic_DNA"/>
</dbReference>
<dbReference type="RefSeq" id="WP_000692229.1">
    <property type="nucleotide sequence ID" value="NC_011745.1"/>
</dbReference>
<dbReference type="SMR" id="B7MNP8"/>
<dbReference type="KEGG" id="ecq:ECED1_0040"/>
<dbReference type="HOGENOM" id="CLU_060196_2_2_6"/>
<dbReference type="UniPathway" id="UPA00117"/>
<dbReference type="Proteomes" id="UP000000748">
    <property type="component" value="Chromosome"/>
</dbReference>
<dbReference type="GO" id="GO:0009055">
    <property type="term" value="F:electron transfer activity"/>
    <property type="evidence" value="ECO:0007669"/>
    <property type="project" value="InterPro"/>
</dbReference>
<dbReference type="GO" id="GO:0009437">
    <property type="term" value="P:carnitine metabolic process"/>
    <property type="evidence" value="ECO:0007669"/>
    <property type="project" value="UniProtKB-UniRule"/>
</dbReference>
<dbReference type="CDD" id="cd01714">
    <property type="entry name" value="ETF_beta"/>
    <property type="match status" value="1"/>
</dbReference>
<dbReference type="FunFam" id="3.40.50.620:FF:000072">
    <property type="entry name" value="Protein FixA homolog"/>
    <property type="match status" value="1"/>
</dbReference>
<dbReference type="Gene3D" id="3.40.50.620">
    <property type="entry name" value="HUPs"/>
    <property type="match status" value="1"/>
</dbReference>
<dbReference type="HAMAP" id="MF_01055">
    <property type="entry name" value="FixA"/>
    <property type="match status" value="1"/>
</dbReference>
<dbReference type="InterPro" id="IPR000049">
    <property type="entry name" value="ET-Flavoprotein_bsu_CS"/>
</dbReference>
<dbReference type="InterPro" id="IPR014730">
    <property type="entry name" value="ETF_a/b_N"/>
</dbReference>
<dbReference type="InterPro" id="IPR012255">
    <property type="entry name" value="ETF_b"/>
</dbReference>
<dbReference type="InterPro" id="IPR033948">
    <property type="entry name" value="ETF_beta_N"/>
</dbReference>
<dbReference type="InterPro" id="IPR023463">
    <property type="entry name" value="FixA"/>
</dbReference>
<dbReference type="InterPro" id="IPR014729">
    <property type="entry name" value="Rossmann-like_a/b/a_fold"/>
</dbReference>
<dbReference type="NCBIfam" id="NF002888">
    <property type="entry name" value="PRK03359.1"/>
    <property type="match status" value="1"/>
</dbReference>
<dbReference type="PANTHER" id="PTHR21294">
    <property type="entry name" value="ELECTRON TRANSFER FLAVOPROTEIN BETA-SUBUNIT"/>
    <property type="match status" value="1"/>
</dbReference>
<dbReference type="PANTHER" id="PTHR21294:SF17">
    <property type="entry name" value="PROTEIN FIXA"/>
    <property type="match status" value="1"/>
</dbReference>
<dbReference type="Pfam" id="PF01012">
    <property type="entry name" value="ETF"/>
    <property type="match status" value="1"/>
</dbReference>
<dbReference type="PIRSF" id="PIRSF000090">
    <property type="entry name" value="Beta-ETF"/>
    <property type="match status" value="1"/>
</dbReference>
<dbReference type="SMART" id="SM00893">
    <property type="entry name" value="ETF"/>
    <property type="match status" value="1"/>
</dbReference>
<dbReference type="SUPFAM" id="SSF52402">
    <property type="entry name" value="Adenine nucleotide alpha hydrolases-like"/>
    <property type="match status" value="1"/>
</dbReference>
<dbReference type="PROSITE" id="PS01065">
    <property type="entry name" value="ETF_BETA"/>
    <property type="match status" value="1"/>
</dbReference>
<keyword id="KW-0249">Electron transport</keyword>
<keyword id="KW-0813">Transport</keyword>
<reference key="1">
    <citation type="journal article" date="2009" name="PLoS Genet.">
        <title>Organised genome dynamics in the Escherichia coli species results in highly diverse adaptive paths.</title>
        <authorList>
            <person name="Touchon M."/>
            <person name="Hoede C."/>
            <person name="Tenaillon O."/>
            <person name="Barbe V."/>
            <person name="Baeriswyl S."/>
            <person name="Bidet P."/>
            <person name="Bingen E."/>
            <person name="Bonacorsi S."/>
            <person name="Bouchier C."/>
            <person name="Bouvet O."/>
            <person name="Calteau A."/>
            <person name="Chiapello H."/>
            <person name="Clermont O."/>
            <person name="Cruveiller S."/>
            <person name="Danchin A."/>
            <person name="Diard M."/>
            <person name="Dossat C."/>
            <person name="Karoui M.E."/>
            <person name="Frapy E."/>
            <person name="Garry L."/>
            <person name="Ghigo J.M."/>
            <person name="Gilles A.M."/>
            <person name="Johnson J."/>
            <person name="Le Bouguenec C."/>
            <person name="Lescat M."/>
            <person name="Mangenot S."/>
            <person name="Martinez-Jehanne V."/>
            <person name="Matic I."/>
            <person name="Nassif X."/>
            <person name="Oztas S."/>
            <person name="Petit M.A."/>
            <person name="Pichon C."/>
            <person name="Rouy Z."/>
            <person name="Ruf C.S."/>
            <person name="Schneider D."/>
            <person name="Tourret J."/>
            <person name="Vacherie B."/>
            <person name="Vallenet D."/>
            <person name="Medigue C."/>
            <person name="Rocha E.P.C."/>
            <person name="Denamur E."/>
        </authorList>
    </citation>
    <scope>NUCLEOTIDE SEQUENCE [LARGE SCALE GENOMIC DNA]</scope>
    <source>
        <strain>ED1a</strain>
    </source>
</reference>
<comment type="function">
    <text evidence="1">Required for anaerobic carnitine reduction. May bring reductant to CaiA.</text>
</comment>
<comment type="pathway">
    <text evidence="1">Amine and polyamine metabolism; carnitine metabolism.</text>
</comment>
<comment type="subunit">
    <text evidence="1">Heterodimer of FixA and FixB.</text>
</comment>
<comment type="similarity">
    <text evidence="1">Belongs to the ETF beta-subunit/FixA family.</text>
</comment>